<sequence>MKNDVISPEFDENGRPLRRIRSFVRRQGRLTKGQEHALENYWPVMGVEFSEDMLDFPALFGREAPVTLEIGFGMGASLVAMAKDRPEQDFLGIEVHSPGVGACLASAHEEGLSNLRVMCHDAVEVLHKMIPDNSLRMVQLFFPDPWHKARHNKRRIVQVPFAELVKSKLQLGGVFHMATDWEPYAEHMLEVMSSIDGYKNLSESNDYVPRPASRPVTKFEQRGHRLGHGVWDLMFERVK</sequence>
<evidence type="ECO:0000250" key="1"/>
<evidence type="ECO:0000255" key="2">
    <source>
        <dbReference type="HAMAP-Rule" id="MF_01057"/>
    </source>
</evidence>
<dbReference type="EC" id="2.1.1.33" evidence="2"/>
<dbReference type="EMBL" id="CP000946">
    <property type="protein sequence ID" value="ACA76426.1"/>
    <property type="molecule type" value="Genomic_DNA"/>
</dbReference>
<dbReference type="RefSeq" id="WP_000786911.1">
    <property type="nucleotide sequence ID" value="NZ_MTFT01000004.1"/>
</dbReference>
<dbReference type="SMR" id="B1IT47"/>
<dbReference type="GeneID" id="93779031"/>
<dbReference type="KEGG" id="ecl:EcolC_0754"/>
<dbReference type="HOGENOM" id="CLU_050910_0_1_6"/>
<dbReference type="UniPathway" id="UPA00989"/>
<dbReference type="GO" id="GO:0043527">
    <property type="term" value="C:tRNA methyltransferase complex"/>
    <property type="evidence" value="ECO:0007669"/>
    <property type="project" value="TreeGrafter"/>
</dbReference>
<dbReference type="GO" id="GO:0008176">
    <property type="term" value="F:tRNA (guanine(46)-N7)-methyltransferase activity"/>
    <property type="evidence" value="ECO:0007669"/>
    <property type="project" value="UniProtKB-UniRule"/>
</dbReference>
<dbReference type="FunFam" id="3.40.50.150:FF:000024">
    <property type="entry name" value="tRNA (guanine-N(7)-)-methyltransferase"/>
    <property type="match status" value="1"/>
</dbReference>
<dbReference type="Gene3D" id="3.40.50.150">
    <property type="entry name" value="Vaccinia Virus protein VP39"/>
    <property type="match status" value="1"/>
</dbReference>
<dbReference type="HAMAP" id="MF_01057">
    <property type="entry name" value="tRNA_methyltr_TrmB"/>
    <property type="match status" value="1"/>
</dbReference>
<dbReference type="InterPro" id="IPR029063">
    <property type="entry name" value="SAM-dependent_MTases_sf"/>
</dbReference>
<dbReference type="InterPro" id="IPR003358">
    <property type="entry name" value="tRNA_(Gua-N-7)_MeTrfase_Trmb"/>
</dbReference>
<dbReference type="InterPro" id="IPR055361">
    <property type="entry name" value="tRNA_methyltr_TrmB_bact"/>
</dbReference>
<dbReference type="NCBIfam" id="TIGR00091">
    <property type="entry name" value="tRNA (guanosine(46)-N7)-methyltransferase TrmB"/>
    <property type="match status" value="1"/>
</dbReference>
<dbReference type="PANTHER" id="PTHR23417">
    <property type="entry name" value="3-DEOXY-D-MANNO-OCTULOSONIC-ACID TRANSFERASE/TRNA GUANINE-N 7 - -METHYLTRANSFERASE"/>
    <property type="match status" value="1"/>
</dbReference>
<dbReference type="PANTHER" id="PTHR23417:SF14">
    <property type="entry name" value="PENTACOTRIPEPTIDE-REPEAT REGION OF PRORP DOMAIN-CONTAINING PROTEIN"/>
    <property type="match status" value="1"/>
</dbReference>
<dbReference type="Pfam" id="PF02390">
    <property type="entry name" value="Methyltransf_4"/>
    <property type="match status" value="1"/>
</dbReference>
<dbReference type="SUPFAM" id="SSF53335">
    <property type="entry name" value="S-adenosyl-L-methionine-dependent methyltransferases"/>
    <property type="match status" value="1"/>
</dbReference>
<dbReference type="PROSITE" id="PS51625">
    <property type="entry name" value="SAM_MT_TRMB"/>
    <property type="match status" value="1"/>
</dbReference>
<reference key="1">
    <citation type="submission" date="2008-02" db="EMBL/GenBank/DDBJ databases">
        <title>Complete sequence of Escherichia coli C str. ATCC 8739.</title>
        <authorList>
            <person name="Copeland A."/>
            <person name="Lucas S."/>
            <person name="Lapidus A."/>
            <person name="Glavina del Rio T."/>
            <person name="Dalin E."/>
            <person name="Tice H."/>
            <person name="Bruce D."/>
            <person name="Goodwin L."/>
            <person name="Pitluck S."/>
            <person name="Kiss H."/>
            <person name="Brettin T."/>
            <person name="Detter J.C."/>
            <person name="Han C."/>
            <person name="Kuske C.R."/>
            <person name="Schmutz J."/>
            <person name="Larimer F."/>
            <person name="Land M."/>
            <person name="Hauser L."/>
            <person name="Kyrpides N."/>
            <person name="Mikhailova N."/>
            <person name="Ingram L."/>
            <person name="Richardson P."/>
        </authorList>
    </citation>
    <scope>NUCLEOTIDE SEQUENCE [LARGE SCALE GENOMIC DNA]</scope>
    <source>
        <strain>ATCC 8739 / DSM 1576 / NBRC 3972 / NCIMB 8545 / WDCM 00012 / Crooks</strain>
    </source>
</reference>
<name>TRMB_ECOLC</name>
<proteinExistence type="inferred from homology"/>
<comment type="function">
    <text evidence="2">Catalyzes the formation of N(7)-methylguanine at position 46 (m7G46) in tRNA.</text>
</comment>
<comment type="catalytic activity">
    <reaction evidence="2">
        <text>guanosine(46) in tRNA + S-adenosyl-L-methionine = N(7)-methylguanosine(46) in tRNA + S-adenosyl-L-homocysteine</text>
        <dbReference type="Rhea" id="RHEA:42708"/>
        <dbReference type="Rhea" id="RHEA-COMP:10188"/>
        <dbReference type="Rhea" id="RHEA-COMP:10189"/>
        <dbReference type="ChEBI" id="CHEBI:57856"/>
        <dbReference type="ChEBI" id="CHEBI:59789"/>
        <dbReference type="ChEBI" id="CHEBI:74269"/>
        <dbReference type="ChEBI" id="CHEBI:74480"/>
        <dbReference type="EC" id="2.1.1.33"/>
    </reaction>
</comment>
<comment type="pathway">
    <text evidence="2">tRNA modification; N(7)-methylguanine-tRNA biosynthesis.</text>
</comment>
<comment type="subunit">
    <text evidence="2">Monomer.</text>
</comment>
<comment type="similarity">
    <text evidence="2">Belongs to the class I-like SAM-binding methyltransferase superfamily. TrmB family.</text>
</comment>
<gene>
    <name evidence="2" type="primary">trmB</name>
    <name type="ordered locus">EcolC_0754</name>
</gene>
<protein>
    <recommendedName>
        <fullName evidence="2">tRNA (guanine-N(7)-)-methyltransferase</fullName>
        <ecNumber evidence="2">2.1.1.33</ecNumber>
    </recommendedName>
    <alternativeName>
        <fullName evidence="2">tRNA (guanine(46)-N(7))-methyltransferase</fullName>
    </alternativeName>
    <alternativeName>
        <fullName evidence="2">tRNA(m7G46)-methyltransferase</fullName>
    </alternativeName>
</protein>
<keyword id="KW-0489">Methyltransferase</keyword>
<keyword id="KW-0949">S-adenosyl-L-methionine</keyword>
<keyword id="KW-0808">Transferase</keyword>
<keyword id="KW-0819">tRNA processing</keyword>
<organism>
    <name type="scientific">Escherichia coli (strain ATCC 8739 / DSM 1576 / NBRC 3972 / NCIMB 8545 / WDCM 00012 / Crooks)</name>
    <dbReference type="NCBI Taxonomy" id="481805"/>
    <lineage>
        <taxon>Bacteria</taxon>
        <taxon>Pseudomonadati</taxon>
        <taxon>Pseudomonadota</taxon>
        <taxon>Gammaproteobacteria</taxon>
        <taxon>Enterobacterales</taxon>
        <taxon>Enterobacteriaceae</taxon>
        <taxon>Escherichia</taxon>
    </lineage>
</organism>
<feature type="chain" id="PRO_1000084441" description="tRNA (guanine-N(7)-)-methyltransferase">
    <location>
        <begin position="1"/>
        <end position="239"/>
    </location>
</feature>
<feature type="region of interest" description="Interaction with RNA" evidence="2">
    <location>
        <begin position="150"/>
        <end position="155"/>
    </location>
</feature>
<feature type="active site" evidence="1">
    <location>
        <position position="144"/>
    </location>
</feature>
<feature type="binding site" evidence="2">
    <location>
        <position position="69"/>
    </location>
    <ligand>
        <name>S-adenosyl-L-methionine</name>
        <dbReference type="ChEBI" id="CHEBI:59789"/>
    </ligand>
</feature>
<feature type="binding site" evidence="2">
    <location>
        <position position="94"/>
    </location>
    <ligand>
        <name>S-adenosyl-L-methionine</name>
        <dbReference type="ChEBI" id="CHEBI:59789"/>
    </ligand>
</feature>
<feature type="binding site" evidence="2">
    <location>
        <position position="121"/>
    </location>
    <ligand>
        <name>S-adenosyl-L-methionine</name>
        <dbReference type="ChEBI" id="CHEBI:59789"/>
    </ligand>
</feature>
<feature type="binding site" evidence="2">
    <location>
        <position position="144"/>
    </location>
    <ligand>
        <name>S-adenosyl-L-methionine</name>
        <dbReference type="ChEBI" id="CHEBI:59789"/>
    </ligand>
</feature>
<feature type="binding site" evidence="2">
    <location>
        <position position="148"/>
    </location>
    <ligand>
        <name>substrate</name>
    </ligand>
</feature>
<feature type="binding site" evidence="2">
    <location>
        <position position="180"/>
    </location>
    <ligand>
        <name>substrate</name>
    </ligand>
</feature>
<feature type="binding site" evidence="2">
    <location>
        <begin position="217"/>
        <end position="220"/>
    </location>
    <ligand>
        <name>substrate</name>
    </ligand>
</feature>
<accession>B1IT47</accession>